<gene>
    <name type="ordered locus">PPA1427</name>
</gene>
<proteinExistence type="inferred from homology"/>
<sequence>MGLSDKINSKSDEAVGAAKEKIGGLTDDSDLKSAGADQKASGKVAQKVEDVKDKANDLKHNVQAAADKLKG</sequence>
<organism>
    <name type="scientific">Cutibacterium acnes (strain DSM 16379 / KPA171202)</name>
    <name type="common">Propionibacterium acnes</name>
    <dbReference type="NCBI Taxonomy" id="267747"/>
    <lineage>
        <taxon>Bacteria</taxon>
        <taxon>Bacillati</taxon>
        <taxon>Actinomycetota</taxon>
        <taxon>Actinomycetes</taxon>
        <taxon>Propionibacteriales</taxon>
        <taxon>Propionibacteriaceae</taxon>
        <taxon>Cutibacterium</taxon>
    </lineage>
</organism>
<dbReference type="EMBL" id="AE017283">
    <property type="protein sequence ID" value="AAT83176.1"/>
    <property type="molecule type" value="Genomic_DNA"/>
</dbReference>
<dbReference type="RefSeq" id="WP_002516099.1">
    <property type="nucleotide sequence ID" value="NZ_CP025935.1"/>
</dbReference>
<dbReference type="SMR" id="Q6A7T9"/>
<dbReference type="EnsemblBacteria" id="AAT83176">
    <property type="protein sequence ID" value="AAT83176"/>
    <property type="gene ID" value="PPA1427"/>
</dbReference>
<dbReference type="KEGG" id="pac:PPA1427"/>
<dbReference type="HOGENOM" id="CLU_135567_1_2_11"/>
<dbReference type="Proteomes" id="UP000000603">
    <property type="component" value="Chromosome"/>
</dbReference>
<dbReference type="Gene3D" id="1.10.1470.10">
    <property type="entry name" value="YjbJ"/>
    <property type="match status" value="1"/>
</dbReference>
<dbReference type="InterPro" id="IPR008462">
    <property type="entry name" value="CsbD"/>
</dbReference>
<dbReference type="InterPro" id="IPR036629">
    <property type="entry name" value="YjbJ_sf"/>
</dbReference>
<dbReference type="Pfam" id="PF05532">
    <property type="entry name" value="CsbD"/>
    <property type="match status" value="1"/>
</dbReference>
<dbReference type="SUPFAM" id="SSF69047">
    <property type="entry name" value="Hypothetical protein YjbJ"/>
    <property type="match status" value="1"/>
</dbReference>
<name>Y1427_CUTAK</name>
<reference key="1">
    <citation type="journal article" date="2004" name="Science">
        <title>The complete genome sequence of Propionibacterium acnes, a commensal of human skin.</title>
        <authorList>
            <person name="Brueggemann H."/>
            <person name="Henne A."/>
            <person name="Hoster F."/>
            <person name="Liesegang H."/>
            <person name="Wiezer A."/>
            <person name="Strittmatter A."/>
            <person name="Hujer S."/>
            <person name="Duerre P."/>
            <person name="Gottschalk G."/>
        </authorList>
    </citation>
    <scope>NUCLEOTIDE SEQUENCE [LARGE SCALE GENOMIC DNA]</scope>
    <source>
        <strain>DSM 16379 / KPA171202</strain>
    </source>
</reference>
<evidence type="ECO:0000256" key="1">
    <source>
        <dbReference type="SAM" id="MobiDB-lite"/>
    </source>
</evidence>
<evidence type="ECO:0000305" key="2"/>
<protein>
    <recommendedName>
        <fullName>UPF0337 protein PPA1427</fullName>
    </recommendedName>
</protein>
<feature type="chain" id="PRO_0000210015" description="UPF0337 protein PPA1427">
    <location>
        <begin position="1"/>
        <end position="71"/>
    </location>
</feature>
<feature type="region of interest" description="Disordered" evidence="1">
    <location>
        <begin position="20"/>
        <end position="46"/>
    </location>
</feature>
<accession>Q6A7T9</accession>
<comment type="similarity">
    <text evidence="2">Belongs to the UPF0337 (CsbD) family.</text>
</comment>